<reference key="1">
    <citation type="journal article" date="2008" name="J. Bacteriol.">
        <title>The complete genome sequence of Escherichia coli DH10B: insights into the biology of a laboratory workhorse.</title>
        <authorList>
            <person name="Durfee T."/>
            <person name="Nelson R."/>
            <person name="Baldwin S."/>
            <person name="Plunkett G. III"/>
            <person name="Burland V."/>
            <person name="Mau B."/>
            <person name="Petrosino J.F."/>
            <person name="Qin X."/>
            <person name="Muzny D.M."/>
            <person name="Ayele M."/>
            <person name="Gibbs R.A."/>
            <person name="Csorgo B."/>
            <person name="Posfai G."/>
            <person name="Weinstock G.M."/>
            <person name="Blattner F.R."/>
        </authorList>
    </citation>
    <scope>NUCLEOTIDE SEQUENCE [LARGE SCALE GENOMIC DNA]</scope>
    <source>
        <strain>K12 / DH10B</strain>
    </source>
</reference>
<gene>
    <name evidence="1" type="primary">rtcA</name>
    <name type="ordered locus">ECDH10B_3594</name>
</gene>
<name>RTCA_ECODH</name>
<comment type="function">
    <text evidence="1">Catalyzes the conversion of 3'-phosphate to a 2',3'-cyclic phosphodiester at the end of RNA. The mechanism of action of the enzyme occurs in 3 steps: (A) adenylation of the enzyme by ATP; (B) transfer of adenylate to an RNA-N3'P to produce RNA-N3'PP5'A; (C) and attack of the adjacent 2'-hydroxyl on the 3'-phosphorus in the diester linkage to produce the cyclic end product. The biological role of this enzyme is unknown but it is likely to function in some aspects of cellular RNA processing.</text>
</comment>
<comment type="catalytic activity">
    <reaction evidence="1">
        <text>a 3'-end 3'-phospho-ribonucleotide-RNA + ATP = a 3'-end 2',3'-cyclophospho-ribonucleotide-RNA + AMP + diphosphate</text>
        <dbReference type="Rhea" id="RHEA:23976"/>
        <dbReference type="Rhea" id="RHEA-COMP:10463"/>
        <dbReference type="Rhea" id="RHEA-COMP:10464"/>
        <dbReference type="ChEBI" id="CHEBI:30616"/>
        <dbReference type="ChEBI" id="CHEBI:33019"/>
        <dbReference type="ChEBI" id="CHEBI:83062"/>
        <dbReference type="ChEBI" id="CHEBI:83064"/>
        <dbReference type="ChEBI" id="CHEBI:456215"/>
        <dbReference type="EC" id="6.5.1.4"/>
    </reaction>
</comment>
<comment type="subcellular location">
    <subcellularLocation>
        <location evidence="1">Cytoplasm</location>
    </subcellularLocation>
</comment>
<comment type="similarity">
    <text evidence="1">Belongs to the RNA 3'-terminal cyclase family. Type 1 subfamily.</text>
</comment>
<evidence type="ECO:0000255" key="1">
    <source>
        <dbReference type="HAMAP-Rule" id="MF_00200"/>
    </source>
</evidence>
<protein>
    <recommendedName>
        <fullName evidence="1">RNA 3'-terminal phosphate cyclase</fullName>
        <shortName evidence="1">RNA cyclase</shortName>
        <shortName evidence="1">RNA-3'-phosphate cyclase</shortName>
        <ecNumber evidence="1">6.5.1.4</ecNumber>
    </recommendedName>
</protein>
<dbReference type="EC" id="6.5.1.4" evidence="1"/>
<dbReference type="EMBL" id="CP000948">
    <property type="protein sequence ID" value="ACB04477.1"/>
    <property type="molecule type" value="Genomic_DNA"/>
</dbReference>
<dbReference type="RefSeq" id="WP_001335950.1">
    <property type="nucleotide sequence ID" value="NC_010473.1"/>
</dbReference>
<dbReference type="SMR" id="B1X765"/>
<dbReference type="KEGG" id="ecd:ECDH10B_3594"/>
<dbReference type="HOGENOM" id="CLU_027882_0_0_6"/>
<dbReference type="GO" id="GO:0005737">
    <property type="term" value="C:cytoplasm"/>
    <property type="evidence" value="ECO:0007669"/>
    <property type="project" value="UniProtKB-SubCell"/>
</dbReference>
<dbReference type="GO" id="GO:0005524">
    <property type="term" value="F:ATP binding"/>
    <property type="evidence" value="ECO:0007669"/>
    <property type="project" value="UniProtKB-KW"/>
</dbReference>
<dbReference type="GO" id="GO:0003963">
    <property type="term" value="F:RNA-3'-phosphate cyclase activity"/>
    <property type="evidence" value="ECO:0007669"/>
    <property type="project" value="UniProtKB-UniRule"/>
</dbReference>
<dbReference type="GO" id="GO:0006396">
    <property type="term" value="P:RNA processing"/>
    <property type="evidence" value="ECO:0007669"/>
    <property type="project" value="InterPro"/>
</dbReference>
<dbReference type="CDD" id="cd00295">
    <property type="entry name" value="RNA_Cyclase"/>
    <property type="match status" value="1"/>
</dbReference>
<dbReference type="FunFam" id="3.65.10.20:FF:000002">
    <property type="entry name" value="GM19193"/>
    <property type="match status" value="1"/>
</dbReference>
<dbReference type="FunFam" id="3.30.360.20:FF:000003">
    <property type="entry name" value="RNA 3'-terminal phosphate cyclase"/>
    <property type="match status" value="1"/>
</dbReference>
<dbReference type="Gene3D" id="3.65.10.20">
    <property type="entry name" value="RNA 3'-terminal phosphate cyclase domain"/>
    <property type="match status" value="1"/>
</dbReference>
<dbReference type="Gene3D" id="3.30.360.20">
    <property type="entry name" value="RNA 3'-terminal phosphate cyclase, insert domain"/>
    <property type="match status" value="1"/>
</dbReference>
<dbReference type="HAMAP" id="MF_00200">
    <property type="entry name" value="RTC"/>
    <property type="match status" value="1"/>
</dbReference>
<dbReference type="InterPro" id="IPR013791">
    <property type="entry name" value="RNA3'-term_phos_cycl_insert"/>
</dbReference>
<dbReference type="InterPro" id="IPR023797">
    <property type="entry name" value="RNA3'_phos_cyclase_dom"/>
</dbReference>
<dbReference type="InterPro" id="IPR037136">
    <property type="entry name" value="RNA3'_phos_cyclase_dom_sf"/>
</dbReference>
<dbReference type="InterPro" id="IPR000228">
    <property type="entry name" value="RNA3'_term_phos_cyc"/>
</dbReference>
<dbReference type="InterPro" id="IPR017770">
    <property type="entry name" value="RNA3'_term_phos_cyc_type_1"/>
</dbReference>
<dbReference type="InterPro" id="IPR020719">
    <property type="entry name" value="RNA3'_term_phos_cycl-like_CS"/>
</dbReference>
<dbReference type="InterPro" id="IPR013792">
    <property type="entry name" value="RNA3'P_cycl/enolpyr_Trfase_a/b"/>
</dbReference>
<dbReference type="InterPro" id="IPR036553">
    <property type="entry name" value="RPTC_insert"/>
</dbReference>
<dbReference type="NCBIfam" id="NF003246">
    <property type="entry name" value="PRK04204.1-2"/>
    <property type="match status" value="1"/>
</dbReference>
<dbReference type="NCBIfam" id="NF003247">
    <property type="entry name" value="PRK04204.1-3"/>
    <property type="match status" value="1"/>
</dbReference>
<dbReference type="NCBIfam" id="TIGR03399">
    <property type="entry name" value="RNA_3prim_cycl"/>
    <property type="match status" value="1"/>
</dbReference>
<dbReference type="PANTHER" id="PTHR11096">
    <property type="entry name" value="RNA 3' TERMINAL PHOSPHATE CYCLASE"/>
    <property type="match status" value="1"/>
</dbReference>
<dbReference type="PANTHER" id="PTHR11096:SF0">
    <property type="entry name" value="RNA 3'-TERMINAL PHOSPHATE CYCLASE"/>
    <property type="match status" value="1"/>
</dbReference>
<dbReference type="Pfam" id="PF01137">
    <property type="entry name" value="RTC"/>
    <property type="match status" value="1"/>
</dbReference>
<dbReference type="Pfam" id="PF05189">
    <property type="entry name" value="RTC_insert"/>
    <property type="match status" value="1"/>
</dbReference>
<dbReference type="PIRSF" id="PIRSF005378">
    <property type="entry name" value="RNA3'_term_phos_cycl_euk"/>
    <property type="match status" value="1"/>
</dbReference>
<dbReference type="SUPFAM" id="SSF55205">
    <property type="entry name" value="EPT/RTPC-like"/>
    <property type="match status" value="2"/>
</dbReference>
<dbReference type="SUPFAM" id="SSF52913">
    <property type="entry name" value="RNA 3'-terminal phosphate cyclase, RPTC, insert domain"/>
    <property type="match status" value="1"/>
</dbReference>
<dbReference type="PROSITE" id="PS01287">
    <property type="entry name" value="RTC"/>
    <property type="match status" value="1"/>
</dbReference>
<feature type="chain" id="PRO_1000099347" description="RNA 3'-terminal phosphate cyclase">
    <location>
        <begin position="1"/>
        <end position="338"/>
    </location>
</feature>
<feature type="active site" description="Tele-AMP-histidine intermediate" evidence="1">
    <location>
        <position position="308"/>
    </location>
</feature>
<feature type="binding site" evidence="1">
    <location>
        <position position="103"/>
    </location>
    <ligand>
        <name>ATP</name>
        <dbReference type="ChEBI" id="CHEBI:30616"/>
    </ligand>
</feature>
<feature type="binding site" evidence="1">
    <location>
        <begin position="283"/>
        <end position="287"/>
    </location>
    <ligand>
        <name>ATP</name>
        <dbReference type="ChEBI" id="CHEBI:30616"/>
    </ligand>
</feature>
<sequence length="338" mass="35903">MKRMIALDGAQGEGGGQILRSALSLSMITGQPFTITSIRAGRAKPGLLRQHLTAVKAATEICGATVEGAELGSQRLLFRPGTVRGGDYRFAIGSAGSCTLVLQTVLPALWFADGPSRVEVSGGTDNPSAPPADFIRRVLEPLLAKIGIHQQTTLLRHGFYPAGGGVVATEVSPVASFNTLQLGERGNIVQMRGEVLLAGVPRHVAEREIATLAGSFSLHEQNIHNLPRDQGPGNTVSLEVESENITERFFVVGEKRVSAEVVAAQLVKEVKRYLASTAAVGEYLADQLVLPMALAGAGEFTVAHPSCHLLTNIAVVERFLPVRFSLIETDGVTRVSIE</sequence>
<keyword id="KW-0067">ATP-binding</keyword>
<keyword id="KW-0963">Cytoplasm</keyword>
<keyword id="KW-0436">Ligase</keyword>
<keyword id="KW-0547">Nucleotide-binding</keyword>
<accession>B1X765</accession>
<proteinExistence type="inferred from homology"/>
<organism>
    <name type="scientific">Escherichia coli (strain K12 / DH10B)</name>
    <dbReference type="NCBI Taxonomy" id="316385"/>
    <lineage>
        <taxon>Bacteria</taxon>
        <taxon>Pseudomonadati</taxon>
        <taxon>Pseudomonadota</taxon>
        <taxon>Gammaproteobacteria</taxon>
        <taxon>Enterobacterales</taxon>
        <taxon>Enterobacteriaceae</taxon>
        <taxon>Escherichia</taxon>
    </lineage>
</organism>